<proteinExistence type="inferred from homology"/>
<comment type="catalytic activity">
    <reaction evidence="1">
        <text>L-citrulline + L-aspartate + ATP = 2-(N(omega)-L-arginino)succinate + AMP + diphosphate + H(+)</text>
        <dbReference type="Rhea" id="RHEA:10932"/>
        <dbReference type="ChEBI" id="CHEBI:15378"/>
        <dbReference type="ChEBI" id="CHEBI:29991"/>
        <dbReference type="ChEBI" id="CHEBI:30616"/>
        <dbReference type="ChEBI" id="CHEBI:33019"/>
        <dbReference type="ChEBI" id="CHEBI:57472"/>
        <dbReference type="ChEBI" id="CHEBI:57743"/>
        <dbReference type="ChEBI" id="CHEBI:456215"/>
        <dbReference type="EC" id="6.3.4.5"/>
    </reaction>
</comment>
<comment type="pathway">
    <text evidence="1">Amino-acid biosynthesis; L-arginine biosynthesis; L-arginine from L-ornithine and carbamoyl phosphate: step 2/3.</text>
</comment>
<comment type="subunit">
    <text evidence="1">Homotetramer.</text>
</comment>
<comment type="subcellular location">
    <subcellularLocation>
        <location evidence="1">Cytoplasm</location>
    </subcellularLocation>
</comment>
<comment type="similarity">
    <text evidence="1">Belongs to the argininosuccinate synthase family. Type 1 subfamily.</text>
</comment>
<protein>
    <recommendedName>
        <fullName evidence="1">Argininosuccinate synthase</fullName>
        <ecNumber evidence="1">6.3.4.5</ecNumber>
    </recommendedName>
    <alternativeName>
        <fullName evidence="1">Citrulline--aspartate ligase</fullName>
    </alternativeName>
</protein>
<sequence length="412" mass="44998">MSNENSAVTKHAGVKKVVLAYSGGLDTSAIIPWLKETYDDCEIIAFCADVGQGDAELEGLYEKAIASGASECHIVDLKEELVADYIYPTIATGAIYEGTYLLGTSMARPIIAKAQVEVARKVGADAVCHGCTGKGNDQVRFEGCFAALAPDLKVIAPWREWEMVSREDLLDYLAERNIATSASATKIYSRDANAWHISHEGGELEDPWNEPSKGVWTMTVAPEDAPNQPEYVALELEQGKITKVNGEALSPYNALMLLNEVAGAHGVGRIDITENRLVGMKSRGCYETPGGTVMFAALRAIEELVLDKTSREWREQIGTKMAHLVYDGRWFTPLCESLLGASKPLADLINGEVVVKLYKGQASVVKKRSPNSLYSEAFATFGADDVYNQKDAEGFIRLYSLSSRIRALNNQK</sequence>
<keyword id="KW-0028">Amino-acid biosynthesis</keyword>
<keyword id="KW-0055">Arginine biosynthesis</keyword>
<keyword id="KW-0067">ATP-binding</keyword>
<keyword id="KW-0963">Cytoplasm</keyword>
<keyword id="KW-0436">Ligase</keyword>
<keyword id="KW-0547">Nucleotide-binding</keyword>
<reference key="1">
    <citation type="submission" date="2008-01" db="EMBL/GenBank/DDBJ databases">
        <title>Complete sequence of Shewanella halifaxensis HAW-EB4.</title>
        <authorList>
            <consortium name="US DOE Joint Genome Institute"/>
            <person name="Copeland A."/>
            <person name="Lucas S."/>
            <person name="Lapidus A."/>
            <person name="Glavina del Rio T."/>
            <person name="Dalin E."/>
            <person name="Tice H."/>
            <person name="Bruce D."/>
            <person name="Goodwin L."/>
            <person name="Pitluck S."/>
            <person name="Sims D."/>
            <person name="Brettin T."/>
            <person name="Detter J.C."/>
            <person name="Han C."/>
            <person name="Kuske C.R."/>
            <person name="Schmutz J."/>
            <person name="Larimer F."/>
            <person name="Land M."/>
            <person name="Hauser L."/>
            <person name="Kyrpides N."/>
            <person name="Kim E."/>
            <person name="Zhao J.-S."/>
            <person name="Richardson P."/>
        </authorList>
    </citation>
    <scope>NUCLEOTIDE SEQUENCE [LARGE SCALE GENOMIC DNA]</scope>
    <source>
        <strain>HAW-EB4</strain>
    </source>
</reference>
<gene>
    <name evidence="1" type="primary">argG</name>
    <name type="ordered locus">Shal_4090</name>
</gene>
<evidence type="ECO:0000255" key="1">
    <source>
        <dbReference type="HAMAP-Rule" id="MF_00005"/>
    </source>
</evidence>
<feature type="chain" id="PRO_1000073830" description="Argininosuccinate synthase">
    <location>
        <begin position="1"/>
        <end position="412"/>
    </location>
</feature>
<feature type="binding site" evidence="1">
    <location>
        <begin position="20"/>
        <end position="28"/>
    </location>
    <ligand>
        <name>ATP</name>
        <dbReference type="ChEBI" id="CHEBI:30616"/>
    </ligand>
</feature>
<feature type="binding site" evidence="1">
    <location>
        <position position="48"/>
    </location>
    <ligand>
        <name>ATP</name>
        <dbReference type="ChEBI" id="CHEBI:30616"/>
    </ligand>
</feature>
<feature type="binding site" evidence="1">
    <location>
        <position position="100"/>
    </location>
    <ligand>
        <name>L-citrulline</name>
        <dbReference type="ChEBI" id="CHEBI:57743"/>
    </ligand>
</feature>
<feature type="binding site" evidence="1">
    <location>
        <position position="105"/>
    </location>
    <ligand>
        <name>L-citrulline</name>
        <dbReference type="ChEBI" id="CHEBI:57743"/>
    </ligand>
</feature>
<feature type="binding site" evidence="1">
    <location>
        <position position="130"/>
    </location>
    <ligand>
        <name>ATP</name>
        <dbReference type="ChEBI" id="CHEBI:30616"/>
    </ligand>
</feature>
<feature type="binding site" evidence="1">
    <location>
        <position position="132"/>
    </location>
    <ligand>
        <name>L-aspartate</name>
        <dbReference type="ChEBI" id="CHEBI:29991"/>
    </ligand>
</feature>
<feature type="binding site" evidence="1">
    <location>
        <position position="136"/>
    </location>
    <ligand>
        <name>L-aspartate</name>
        <dbReference type="ChEBI" id="CHEBI:29991"/>
    </ligand>
</feature>
<feature type="binding site" evidence="1">
    <location>
        <position position="136"/>
    </location>
    <ligand>
        <name>L-citrulline</name>
        <dbReference type="ChEBI" id="CHEBI:57743"/>
    </ligand>
</feature>
<feature type="binding site" evidence="1">
    <location>
        <position position="137"/>
    </location>
    <ligand>
        <name>L-aspartate</name>
        <dbReference type="ChEBI" id="CHEBI:29991"/>
    </ligand>
</feature>
<feature type="binding site" evidence="1">
    <location>
        <position position="140"/>
    </location>
    <ligand>
        <name>L-citrulline</name>
        <dbReference type="ChEBI" id="CHEBI:57743"/>
    </ligand>
</feature>
<feature type="binding site" evidence="1">
    <location>
        <position position="189"/>
    </location>
    <ligand>
        <name>L-citrulline</name>
        <dbReference type="ChEBI" id="CHEBI:57743"/>
    </ligand>
</feature>
<feature type="binding site" evidence="1">
    <location>
        <position position="198"/>
    </location>
    <ligand>
        <name>L-citrulline</name>
        <dbReference type="ChEBI" id="CHEBI:57743"/>
    </ligand>
</feature>
<feature type="binding site" evidence="1">
    <location>
        <position position="274"/>
    </location>
    <ligand>
        <name>L-citrulline</name>
        <dbReference type="ChEBI" id="CHEBI:57743"/>
    </ligand>
</feature>
<feature type="binding site" evidence="1">
    <location>
        <position position="286"/>
    </location>
    <ligand>
        <name>L-citrulline</name>
        <dbReference type="ChEBI" id="CHEBI:57743"/>
    </ligand>
</feature>
<accession>B0TL85</accession>
<dbReference type="EC" id="6.3.4.5" evidence="1"/>
<dbReference type="EMBL" id="CP000931">
    <property type="protein sequence ID" value="ABZ78630.1"/>
    <property type="molecule type" value="Genomic_DNA"/>
</dbReference>
<dbReference type="RefSeq" id="WP_012279147.1">
    <property type="nucleotide sequence ID" value="NC_010334.1"/>
</dbReference>
<dbReference type="SMR" id="B0TL85"/>
<dbReference type="STRING" id="458817.Shal_4090"/>
<dbReference type="KEGG" id="shl:Shal_4090"/>
<dbReference type="eggNOG" id="COG0137">
    <property type="taxonomic scope" value="Bacteria"/>
</dbReference>
<dbReference type="HOGENOM" id="CLU_032784_4_2_6"/>
<dbReference type="OrthoDB" id="9801641at2"/>
<dbReference type="UniPathway" id="UPA00068">
    <property type="reaction ID" value="UER00113"/>
</dbReference>
<dbReference type="Proteomes" id="UP000001317">
    <property type="component" value="Chromosome"/>
</dbReference>
<dbReference type="GO" id="GO:0005737">
    <property type="term" value="C:cytoplasm"/>
    <property type="evidence" value="ECO:0007669"/>
    <property type="project" value="UniProtKB-SubCell"/>
</dbReference>
<dbReference type="GO" id="GO:0004055">
    <property type="term" value="F:argininosuccinate synthase activity"/>
    <property type="evidence" value="ECO:0007669"/>
    <property type="project" value="UniProtKB-UniRule"/>
</dbReference>
<dbReference type="GO" id="GO:0005524">
    <property type="term" value="F:ATP binding"/>
    <property type="evidence" value="ECO:0007669"/>
    <property type="project" value="UniProtKB-UniRule"/>
</dbReference>
<dbReference type="GO" id="GO:0000053">
    <property type="term" value="P:argininosuccinate metabolic process"/>
    <property type="evidence" value="ECO:0007669"/>
    <property type="project" value="TreeGrafter"/>
</dbReference>
<dbReference type="GO" id="GO:0006526">
    <property type="term" value="P:L-arginine biosynthetic process"/>
    <property type="evidence" value="ECO:0007669"/>
    <property type="project" value="UniProtKB-UniRule"/>
</dbReference>
<dbReference type="GO" id="GO:0000050">
    <property type="term" value="P:urea cycle"/>
    <property type="evidence" value="ECO:0007669"/>
    <property type="project" value="TreeGrafter"/>
</dbReference>
<dbReference type="CDD" id="cd01999">
    <property type="entry name" value="ASS"/>
    <property type="match status" value="1"/>
</dbReference>
<dbReference type="FunFam" id="3.40.50.620:FF:000019">
    <property type="entry name" value="Argininosuccinate synthase"/>
    <property type="match status" value="1"/>
</dbReference>
<dbReference type="FunFam" id="3.90.1260.10:FF:000007">
    <property type="entry name" value="Argininosuccinate synthase"/>
    <property type="match status" value="1"/>
</dbReference>
<dbReference type="Gene3D" id="3.90.1260.10">
    <property type="entry name" value="Argininosuccinate synthetase, chain A, domain 2"/>
    <property type="match status" value="1"/>
</dbReference>
<dbReference type="Gene3D" id="3.40.50.620">
    <property type="entry name" value="HUPs"/>
    <property type="match status" value="1"/>
</dbReference>
<dbReference type="Gene3D" id="1.20.5.470">
    <property type="entry name" value="Single helix bin"/>
    <property type="match status" value="1"/>
</dbReference>
<dbReference type="HAMAP" id="MF_00005">
    <property type="entry name" value="Arg_succ_synth_type1"/>
    <property type="match status" value="1"/>
</dbReference>
<dbReference type="InterPro" id="IPR048268">
    <property type="entry name" value="Arginosuc_syn_C"/>
</dbReference>
<dbReference type="InterPro" id="IPR048267">
    <property type="entry name" value="Arginosuc_syn_N"/>
</dbReference>
<dbReference type="InterPro" id="IPR001518">
    <property type="entry name" value="Arginosuc_synth"/>
</dbReference>
<dbReference type="InterPro" id="IPR018223">
    <property type="entry name" value="Arginosuc_synth_CS"/>
</dbReference>
<dbReference type="InterPro" id="IPR023434">
    <property type="entry name" value="Arginosuc_synth_type_1_subfam"/>
</dbReference>
<dbReference type="InterPro" id="IPR024074">
    <property type="entry name" value="AS_cat/multimer_dom_body"/>
</dbReference>
<dbReference type="InterPro" id="IPR014729">
    <property type="entry name" value="Rossmann-like_a/b/a_fold"/>
</dbReference>
<dbReference type="NCBIfam" id="TIGR00032">
    <property type="entry name" value="argG"/>
    <property type="match status" value="1"/>
</dbReference>
<dbReference type="NCBIfam" id="NF001770">
    <property type="entry name" value="PRK00509.1"/>
    <property type="match status" value="1"/>
</dbReference>
<dbReference type="PANTHER" id="PTHR11587">
    <property type="entry name" value="ARGININOSUCCINATE SYNTHASE"/>
    <property type="match status" value="1"/>
</dbReference>
<dbReference type="PANTHER" id="PTHR11587:SF2">
    <property type="entry name" value="ARGININOSUCCINATE SYNTHASE"/>
    <property type="match status" value="1"/>
</dbReference>
<dbReference type="Pfam" id="PF20979">
    <property type="entry name" value="Arginosuc_syn_C"/>
    <property type="match status" value="1"/>
</dbReference>
<dbReference type="Pfam" id="PF00764">
    <property type="entry name" value="Arginosuc_synth"/>
    <property type="match status" value="1"/>
</dbReference>
<dbReference type="SUPFAM" id="SSF52402">
    <property type="entry name" value="Adenine nucleotide alpha hydrolases-like"/>
    <property type="match status" value="1"/>
</dbReference>
<dbReference type="SUPFAM" id="SSF69864">
    <property type="entry name" value="Argininosuccinate synthetase, C-terminal domain"/>
    <property type="match status" value="1"/>
</dbReference>
<dbReference type="PROSITE" id="PS00564">
    <property type="entry name" value="ARGININOSUCCIN_SYN_1"/>
    <property type="match status" value="1"/>
</dbReference>
<dbReference type="PROSITE" id="PS00565">
    <property type="entry name" value="ARGININOSUCCIN_SYN_2"/>
    <property type="match status" value="1"/>
</dbReference>
<name>ASSY_SHEHH</name>
<organism>
    <name type="scientific">Shewanella halifaxensis (strain HAW-EB4)</name>
    <dbReference type="NCBI Taxonomy" id="458817"/>
    <lineage>
        <taxon>Bacteria</taxon>
        <taxon>Pseudomonadati</taxon>
        <taxon>Pseudomonadota</taxon>
        <taxon>Gammaproteobacteria</taxon>
        <taxon>Alteromonadales</taxon>
        <taxon>Shewanellaceae</taxon>
        <taxon>Shewanella</taxon>
    </lineage>
</organism>